<proteinExistence type="inferred from homology"/>
<keyword id="KW-1003">Cell membrane</keyword>
<keyword id="KW-0963">Cytoplasm</keyword>
<keyword id="KW-0333">Golgi apparatus</keyword>
<keyword id="KW-0472">Membrane</keyword>
<keyword id="KW-0539">Nucleus</keyword>
<keyword id="KW-0597">Phosphoprotein</keyword>
<reference key="1">
    <citation type="submission" date="2005-11" db="EMBL/GenBank/DDBJ databases">
        <title>NISC comparative sequencing initiative.</title>
        <authorList>
            <person name="Antonellis A."/>
            <person name="Ayele K."/>
            <person name="Benjamin B."/>
            <person name="Blakesley R.W."/>
            <person name="Boakye A."/>
            <person name="Bouffard G.G."/>
            <person name="Brinkley C."/>
            <person name="Brooks S."/>
            <person name="Chu G."/>
            <person name="Coleman H."/>
            <person name="Engle J."/>
            <person name="Gestole M."/>
            <person name="Greene A."/>
            <person name="Guan X."/>
            <person name="Gupta J."/>
            <person name="Haghighi P."/>
            <person name="Han J."/>
            <person name="Hansen N."/>
            <person name="Ho S.-L."/>
            <person name="Hu P."/>
            <person name="Hunter G."/>
            <person name="Hurle B."/>
            <person name="Idol J.R."/>
            <person name="Kwong P."/>
            <person name="Laric P."/>
            <person name="Larson S."/>
            <person name="Lee-Lin S.-Q."/>
            <person name="Legaspi R."/>
            <person name="Madden M."/>
            <person name="Maduro Q.L."/>
            <person name="Maduro V.B."/>
            <person name="Margulies E.H."/>
            <person name="Masiello C."/>
            <person name="Maskeri B."/>
            <person name="McDowell J."/>
            <person name="Mojidi H.A."/>
            <person name="Mullikin J.C."/>
            <person name="Oestreicher J.S."/>
            <person name="Park M."/>
            <person name="Portnoy M.E."/>
            <person name="Prasad A."/>
            <person name="Puri O."/>
            <person name="Reddix-Dugue N."/>
            <person name="Schandler K."/>
            <person name="Schueler M.G."/>
            <person name="Sison C."/>
            <person name="Stantripop S."/>
            <person name="Stephen E."/>
            <person name="Taye A."/>
            <person name="Thomas J.W."/>
            <person name="Thomas P.J."/>
            <person name="Tsipouri V."/>
            <person name="Ung L."/>
            <person name="Vogt J.L."/>
            <person name="Wetherby K.D."/>
            <person name="Young A."/>
            <person name="Green E.D."/>
        </authorList>
    </citation>
    <scope>NUCLEOTIDE SEQUENCE [LARGE SCALE GENOMIC DNA]</scope>
</reference>
<accession>Q2QLD3</accession>
<comment type="function">
    <text evidence="1">May act as a scaffolding protein within caveolar membranes. Interacts directly with G-protein alpha subunits and can functionally regulate their activity. Acts as an accessory protein in conjunction with CAV1 in targeting to lipid rafts and driving caveolae formation. The Ser-36 phosphorylated form has a role in modulating mitosis in endothelial cells. Positive regulator of cellular mitogenesis of the MAPK signaling pathway. Required for the insulin-stimulated nuclear translocation and activation of MAPK1 and STAT3, and the subsequent regulation of cell cycle progression (By similarity).</text>
</comment>
<comment type="subunit">
    <text evidence="1">Monomer or homodimer (By similarity). Interacts with CAV1; the interaction forms a stable heterooligomeric complex that is required for targeting to lipid rafts and for caveolae formation. Tyrosine phosphorylated forms do not form heterooligomers with the Tyr-19-phosphorylated form existing as a monomer or dimer, and the Tyr-27-form as a monomer only. Interacts (tyrosine phosphorylated form) with the SH2 domain-containing proteins, RASA1, NCK1 and SRC. Interacts (tyrosine phosphorylated form) with INSR, the interaction (Tyr-27-phosphorylated form) is increased on insulin stimulation. Interacts (Tyr-19 phosphorylated form) with MAPK1 (phosphorylated form); the interaction, promoted by insulin, leads to nuclear location and MAPK1 activation. Interacts with STAT3; the interaction is increased on insulin-induced tyrosine phosphorylation leading to STAT activation (By similarity).</text>
</comment>
<comment type="subcellular location">
    <subcellularLocation>
        <location evidence="1">Nucleus</location>
    </subcellularLocation>
    <subcellularLocation>
        <location evidence="1">Cytoplasm</location>
    </subcellularLocation>
    <subcellularLocation>
        <location>Golgi apparatus membrane</location>
        <topology>Peripheral membrane protein</topology>
    </subcellularLocation>
    <subcellularLocation>
        <location>Cell membrane</location>
        <topology>Peripheral membrane protein</topology>
    </subcellularLocation>
    <subcellularLocation>
        <location>Membrane</location>
        <location>Caveola</location>
        <topology>Peripheral membrane protein</topology>
    </subcellularLocation>
    <text evidence="1">Potential hairpin-like structure in the membrane. Membrane protein of caveolae. Tyr-19-phosphorylated form is enriched at sites of cell-cell contact and is translocated to the nucleus in complex with MAPK1 in response to insulin (By similarity). Tyr-27-phosphorylated form is located both in the cytoplasm and plasma membrane. CAV1-mediated Ser-23-phosphorylated form locates to the plasma membrane. Ser-36-phosphorylated form resides in intracellular compartments.</text>
</comment>
<comment type="PTM">
    <text evidence="1">Phosphorylated on serine and tyrosine residues. CAV1 promotes phosphorylation on Ser-23 which then targets the complex to the plasma membrane, lipid rafts and caveolae. Phosphorylation on Ser-36 appears to modulate mitosis in endothelial cells (By similarity). Phosphorylation on both Tyr-19 and Tyr-27 is required for insulin-induced 'Ser-727' phosphorylation of STAT3 and its activation. Phosphorylation on Tyr-19 is required for insulin-induced phosphorylation of MAPK1 and DNA binding of STAT3. Tyrosine phosphorylation is induced by both EGF and insulin (By. similarity).</text>
</comment>
<comment type="similarity">
    <text evidence="5">Belongs to the caveolin family.</text>
</comment>
<name>CAV2_CARPS</name>
<organism>
    <name type="scientific">Carollia perspicillata</name>
    <name type="common">Seba's short-tailed bat</name>
    <dbReference type="NCBI Taxonomy" id="40233"/>
    <lineage>
        <taxon>Eukaryota</taxon>
        <taxon>Metazoa</taxon>
        <taxon>Chordata</taxon>
        <taxon>Craniata</taxon>
        <taxon>Vertebrata</taxon>
        <taxon>Euteleostomi</taxon>
        <taxon>Mammalia</taxon>
        <taxon>Eutheria</taxon>
        <taxon>Laurasiatheria</taxon>
        <taxon>Chiroptera</taxon>
        <taxon>Yangochiroptera</taxon>
        <taxon>Phyllostomidae</taxon>
        <taxon>Carolliinae</taxon>
        <taxon>Carollia</taxon>
    </lineage>
</organism>
<protein>
    <recommendedName>
        <fullName>Caveolin-2</fullName>
    </recommendedName>
</protein>
<dbReference type="EMBL" id="DP000018">
    <property type="protein sequence ID" value="ABB89775.1"/>
    <property type="molecule type" value="Genomic_DNA"/>
</dbReference>
<dbReference type="SMR" id="Q2QLD3"/>
<dbReference type="GO" id="GO:0005901">
    <property type="term" value="C:caveola"/>
    <property type="evidence" value="ECO:0000250"/>
    <property type="project" value="UniProtKB"/>
</dbReference>
<dbReference type="GO" id="GO:0031410">
    <property type="term" value="C:cytoplasmic vesicle"/>
    <property type="evidence" value="ECO:0007669"/>
    <property type="project" value="TreeGrafter"/>
</dbReference>
<dbReference type="GO" id="GO:0005925">
    <property type="term" value="C:focal adhesion"/>
    <property type="evidence" value="ECO:0007669"/>
    <property type="project" value="TreeGrafter"/>
</dbReference>
<dbReference type="GO" id="GO:0000139">
    <property type="term" value="C:Golgi membrane"/>
    <property type="evidence" value="ECO:0007669"/>
    <property type="project" value="UniProtKB-SubCell"/>
</dbReference>
<dbReference type="GO" id="GO:0005634">
    <property type="term" value="C:nucleus"/>
    <property type="evidence" value="ECO:0007669"/>
    <property type="project" value="UniProtKB-SubCell"/>
</dbReference>
<dbReference type="GO" id="GO:0048471">
    <property type="term" value="C:perinuclear region of cytoplasm"/>
    <property type="evidence" value="ECO:0000250"/>
    <property type="project" value="UniProtKB"/>
</dbReference>
<dbReference type="GO" id="GO:0044853">
    <property type="term" value="C:plasma membrane raft"/>
    <property type="evidence" value="ECO:0000250"/>
    <property type="project" value="UniProtKB"/>
</dbReference>
<dbReference type="GO" id="GO:0042383">
    <property type="term" value="C:sarcolemma"/>
    <property type="evidence" value="ECO:0007669"/>
    <property type="project" value="TreeGrafter"/>
</dbReference>
<dbReference type="GO" id="GO:0031748">
    <property type="term" value="F:D1 dopamine receptor binding"/>
    <property type="evidence" value="ECO:0000250"/>
    <property type="project" value="UniProtKB"/>
</dbReference>
<dbReference type="GO" id="GO:0060090">
    <property type="term" value="F:molecular adaptor activity"/>
    <property type="evidence" value="ECO:0007669"/>
    <property type="project" value="TreeGrafter"/>
</dbReference>
<dbReference type="GO" id="GO:0019901">
    <property type="term" value="F:protein kinase binding"/>
    <property type="evidence" value="ECO:0007669"/>
    <property type="project" value="TreeGrafter"/>
</dbReference>
<dbReference type="GO" id="GO:0070836">
    <property type="term" value="P:caveola assembly"/>
    <property type="evidence" value="ECO:0000250"/>
    <property type="project" value="UniProtKB"/>
</dbReference>
<dbReference type="GO" id="GO:0007029">
    <property type="term" value="P:endoplasmic reticulum organization"/>
    <property type="evidence" value="ECO:0000250"/>
    <property type="project" value="UniProtKB"/>
</dbReference>
<dbReference type="GO" id="GO:0008286">
    <property type="term" value="P:insulin receptor signaling pathway"/>
    <property type="evidence" value="ECO:0007669"/>
    <property type="project" value="TreeGrafter"/>
</dbReference>
<dbReference type="GO" id="GO:0007005">
    <property type="term" value="P:mitochondrion organization"/>
    <property type="evidence" value="ECO:0000250"/>
    <property type="project" value="UniProtKB"/>
</dbReference>
<dbReference type="GO" id="GO:0001937">
    <property type="term" value="P:negative regulation of endothelial cell proliferation"/>
    <property type="evidence" value="ECO:0000250"/>
    <property type="project" value="UniProtKB"/>
</dbReference>
<dbReference type="GO" id="GO:0060161">
    <property type="term" value="P:positive regulation of dopamine receptor signaling pathway"/>
    <property type="evidence" value="ECO:0000250"/>
    <property type="project" value="UniProtKB"/>
</dbReference>
<dbReference type="GO" id="GO:0051480">
    <property type="term" value="P:regulation of cytosolic calcium ion concentration"/>
    <property type="evidence" value="ECO:0007669"/>
    <property type="project" value="TreeGrafter"/>
</dbReference>
<dbReference type="GO" id="GO:0048741">
    <property type="term" value="P:skeletal muscle fiber development"/>
    <property type="evidence" value="ECO:0000250"/>
    <property type="project" value="UniProtKB"/>
</dbReference>
<dbReference type="GO" id="GO:0048278">
    <property type="term" value="P:vesicle docking"/>
    <property type="evidence" value="ECO:0000250"/>
    <property type="project" value="UniProtKB"/>
</dbReference>
<dbReference type="GO" id="GO:0006906">
    <property type="term" value="P:vesicle fusion"/>
    <property type="evidence" value="ECO:0000250"/>
    <property type="project" value="UniProtKB"/>
</dbReference>
<dbReference type="InterPro" id="IPR001612">
    <property type="entry name" value="Caveolin"/>
</dbReference>
<dbReference type="InterPro" id="IPR018361">
    <property type="entry name" value="Caveolin_CS"/>
</dbReference>
<dbReference type="PANTHER" id="PTHR10844">
    <property type="entry name" value="CAVEOLIN"/>
    <property type="match status" value="1"/>
</dbReference>
<dbReference type="PANTHER" id="PTHR10844:SF3">
    <property type="entry name" value="CAVEOLIN-2"/>
    <property type="match status" value="1"/>
</dbReference>
<dbReference type="Pfam" id="PF01146">
    <property type="entry name" value="Caveolin"/>
    <property type="match status" value="1"/>
</dbReference>
<dbReference type="PROSITE" id="PS01210">
    <property type="entry name" value="CAVEOLIN"/>
    <property type="match status" value="1"/>
</dbReference>
<gene>
    <name type="primary">CAV2</name>
</gene>
<sequence length="162" mass="18185">MGLETEKADVQLFMDDDSYSHHSCVDYADPEKFADSGRDRDPNRLNSNLQVGFEDVIAEPESTHSFDKVWICSHALFEISKYVIYKFLTVFLAIPLAFAAGIIFATLSCLHIWIIMPFVKTCLMVLPSVQTIWRSVTDAVIAPLCTSVGRVFSSVSLQLSRD</sequence>
<feature type="chain" id="PRO_0000226338" description="Caveolin-2">
    <location>
        <begin position="1"/>
        <end position="162"/>
    </location>
</feature>
<feature type="topological domain" description="Cytoplasmic" evidence="4">
    <location>
        <begin position="1"/>
        <end position="86"/>
    </location>
</feature>
<feature type="intramembrane region" description="Helical" evidence="4">
    <location>
        <begin position="87"/>
        <end position="107"/>
    </location>
</feature>
<feature type="topological domain" description="Cytoplasmic" evidence="4">
    <location>
        <begin position="108"/>
        <end position="162"/>
    </location>
</feature>
<feature type="modified residue" description="Phosphotyrosine; by SRC" evidence="2">
    <location>
        <position position="19"/>
    </location>
</feature>
<feature type="modified residue" description="Phosphoserine" evidence="3">
    <location>
        <position position="20"/>
    </location>
</feature>
<feature type="modified residue" description="Phosphoserine" evidence="2">
    <location>
        <position position="23"/>
    </location>
</feature>
<feature type="modified residue" description="Phosphotyrosine; by SRC" evidence="2">
    <location>
        <position position="27"/>
    </location>
</feature>
<feature type="modified residue" description="Phosphoserine" evidence="2">
    <location>
        <position position="36"/>
    </location>
</feature>
<evidence type="ECO:0000250" key="1"/>
<evidence type="ECO:0000250" key="2">
    <source>
        <dbReference type="UniProtKB" id="P51636"/>
    </source>
</evidence>
<evidence type="ECO:0000250" key="3">
    <source>
        <dbReference type="UniProtKB" id="Q9WVC3"/>
    </source>
</evidence>
<evidence type="ECO:0000255" key="4"/>
<evidence type="ECO:0000305" key="5"/>